<sequence>MIEFLIGLIAAVVGILVGYLIARKINNANYEIFLEQAKAKAKAIEFEAEGILRNSKISVQEAEFEAKKAYEDKALKLQKDYNAKFDEISKKEQTVLTEQEILKDSREELEKEKKSAQTIYDEGTSLKKTYETKVEESLKLLERVAGLTEDEAKSEILQKVEEKSRAEIAHIVRKYEEEAKKEAKRNANYILAQATTRYAGEYAAERLINVVNIKNDDLKGRIIGKDGRNIKTLEMISGVDVIIDDTPNAIILSSHNLYRRAIAVRTVELLVEDGRIQPARIEDVYKKVSEEFEAGIQEEGENIVMDLGLTKIHPEIVKLIGKLKFRASYGQNALIHSLEVAHLAGIIAAETGGDENLARRAGILHDIGKALTHEFEGSHVDLGAEICKRYKENPVVINAIYAHHGHEEPTSVESAAVCTADVLSAARPGARREVLEAFLKRVSEIENIATSKEGVKQAYAINAGREIRVIANAKLVNDDEAVLLAKEIAEEIQAKVQYPGEIKVNIIRETRAVDYAK</sequence>
<protein>
    <recommendedName>
        <fullName evidence="1">Ribonuclease Y</fullName>
        <shortName evidence="1">RNase Y</shortName>
        <ecNumber evidence="1">3.1.-.-</ecNumber>
    </recommendedName>
</protein>
<proteinExistence type="inferred from homology"/>
<accession>A7I2Y9</accession>
<gene>
    <name evidence="1" type="primary">rny</name>
    <name type="ordered locus">CHAB381_1330</name>
</gene>
<comment type="function">
    <text evidence="1">Endoribonuclease that initiates mRNA decay.</text>
</comment>
<comment type="subcellular location">
    <subcellularLocation>
        <location evidence="1">Cell membrane</location>
        <topology evidence="1">Single-pass membrane protein</topology>
    </subcellularLocation>
</comment>
<comment type="similarity">
    <text evidence="1">Belongs to the RNase Y family.</text>
</comment>
<comment type="sequence caution" evidence="3">
    <conflict type="erroneous initiation">
        <sequence resource="EMBL-CDS" id="ABS51127"/>
    </conflict>
</comment>
<keyword id="KW-1003">Cell membrane</keyword>
<keyword id="KW-0255">Endonuclease</keyword>
<keyword id="KW-0378">Hydrolase</keyword>
<keyword id="KW-0472">Membrane</keyword>
<keyword id="KW-0540">Nuclease</keyword>
<keyword id="KW-1185">Reference proteome</keyword>
<keyword id="KW-0694">RNA-binding</keyword>
<keyword id="KW-0812">Transmembrane</keyword>
<keyword id="KW-1133">Transmembrane helix</keyword>
<feature type="chain" id="PRO_0000344835" description="Ribonuclease Y">
    <location>
        <begin position="1"/>
        <end position="517"/>
    </location>
</feature>
<feature type="transmembrane region" description="Helical" evidence="1">
    <location>
        <begin position="1"/>
        <end position="21"/>
    </location>
</feature>
<feature type="domain" description="KH" evidence="1">
    <location>
        <begin position="207"/>
        <end position="271"/>
    </location>
</feature>
<feature type="domain" description="HD" evidence="2">
    <location>
        <begin position="333"/>
        <end position="426"/>
    </location>
</feature>
<reference key="1">
    <citation type="submission" date="2007-07" db="EMBL/GenBank/DDBJ databases">
        <title>Complete genome sequence of Campylobacter hominis ATCC BAA-381, a commensal isolated from the human gastrointestinal tract.</title>
        <authorList>
            <person name="Fouts D.E."/>
            <person name="Mongodin E.F."/>
            <person name="Puiu D."/>
            <person name="Sebastian Y."/>
            <person name="Miller W.G."/>
            <person name="Mandrell R.E."/>
            <person name="Nelson K.E."/>
        </authorList>
    </citation>
    <scope>NUCLEOTIDE SEQUENCE [LARGE SCALE GENOMIC DNA]</scope>
    <source>
        <strain>ATCC BAA-381 / DSM 21671 / CCUG 45161 / LMG 19568 / NCTC 13146 / CH001A</strain>
    </source>
</reference>
<dbReference type="EC" id="3.1.-.-" evidence="1"/>
<dbReference type="EMBL" id="CP000776">
    <property type="protein sequence ID" value="ABS51127.1"/>
    <property type="status" value="ALT_INIT"/>
    <property type="molecule type" value="Genomic_DNA"/>
</dbReference>
<dbReference type="RefSeq" id="WP_041570508.1">
    <property type="nucleotide sequence ID" value="NC_009714.1"/>
</dbReference>
<dbReference type="SMR" id="A7I2Y9"/>
<dbReference type="STRING" id="360107.CHAB381_1330"/>
<dbReference type="KEGG" id="cha:CHAB381_1330"/>
<dbReference type="eggNOG" id="COG1418">
    <property type="taxonomic scope" value="Bacteria"/>
</dbReference>
<dbReference type="HOGENOM" id="CLU_028328_1_0_7"/>
<dbReference type="OrthoDB" id="9803205at2"/>
<dbReference type="Proteomes" id="UP000002407">
    <property type="component" value="Chromosome"/>
</dbReference>
<dbReference type="GO" id="GO:0005886">
    <property type="term" value="C:plasma membrane"/>
    <property type="evidence" value="ECO:0007669"/>
    <property type="project" value="UniProtKB-SubCell"/>
</dbReference>
<dbReference type="GO" id="GO:0003723">
    <property type="term" value="F:RNA binding"/>
    <property type="evidence" value="ECO:0007669"/>
    <property type="project" value="UniProtKB-UniRule"/>
</dbReference>
<dbReference type="GO" id="GO:0004521">
    <property type="term" value="F:RNA endonuclease activity"/>
    <property type="evidence" value="ECO:0007669"/>
    <property type="project" value="UniProtKB-UniRule"/>
</dbReference>
<dbReference type="GO" id="GO:0006402">
    <property type="term" value="P:mRNA catabolic process"/>
    <property type="evidence" value="ECO:0007669"/>
    <property type="project" value="UniProtKB-UniRule"/>
</dbReference>
<dbReference type="CDD" id="cd00077">
    <property type="entry name" value="HDc"/>
    <property type="match status" value="1"/>
</dbReference>
<dbReference type="CDD" id="cd22431">
    <property type="entry name" value="KH-I_RNaseY"/>
    <property type="match status" value="1"/>
</dbReference>
<dbReference type="Gene3D" id="1.10.3210.10">
    <property type="entry name" value="Hypothetical protein af1432"/>
    <property type="match status" value="1"/>
</dbReference>
<dbReference type="Gene3D" id="3.30.1370.10">
    <property type="entry name" value="K Homology domain, type 1"/>
    <property type="match status" value="1"/>
</dbReference>
<dbReference type="HAMAP" id="MF_00335">
    <property type="entry name" value="RNase_Y"/>
    <property type="match status" value="1"/>
</dbReference>
<dbReference type="InterPro" id="IPR003607">
    <property type="entry name" value="HD/PDEase_dom"/>
</dbReference>
<dbReference type="InterPro" id="IPR006674">
    <property type="entry name" value="HD_domain"/>
</dbReference>
<dbReference type="InterPro" id="IPR006675">
    <property type="entry name" value="HDIG_dom"/>
</dbReference>
<dbReference type="InterPro" id="IPR004087">
    <property type="entry name" value="KH_dom"/>
</dbReference>
<dbReference type="InterPro" id="IPR004088">
    <property type="entry name" value="KH_dom_type_1"/>
</dbReference>
<dbReference type="InterPro" id="IPR036612">
    <property type="entry name" value="KH_dom_type_1_sf"/>
</dbReference>
<dbReference type="InterPro" id="IPR017705">
    <property type="entry name" value="Ribonuclease_Y"/>
</dbReference>
<dbReference type="InterPro" id="IPR022711">
    <property type="entry name" value="RNase_Y_N"/>
</dbReference>
<dbReference type="NCBIfam" id="TIGR00277">
    <property type="entry name" value="HDIG"/>
    <property type="match status" value="1"/>
</dbReference>
<dbReference type="NCBIfam" id="TIGR03319">
    <property type="entry name" value="RNase_Y"/>
    <property type="match status" value="1"/>
</dbReference>
<dbReference type="PANTHER" id="PTHR12826">
    <property type="entry name" value="RIBONUCLEASE Y"/>
    <property type="match status" value="1"/>
</dbReference>
<dbReference type="PANTHER" id="PTHR12826:SF15">
    <property type="entry name" value="RIBONUCLEASE Y"/>
    <property type="match status" value="1"/>
</dbReference>
<dbReference type="Pfam" id="PF01966">
    <property type="entry name" value="HD"/>
    <property type="match status" value="1"/>
</dbReference>
<dbReference type="Pfam" id="PF00013">
    <property type="entry name" value="KH_1"/>
    <property type="match status" value="1"/>
</dbReference>
<dbReference type="Pfam" id="PF12072">
    <property type="entry name" value="RNase_Y_N"/>
    <property type="match status" value="1"/>
</dbReference>
<dbReference type="SMART" id="SM00471">
    <property type="entry name" value="HDc"/>
    <property type="match status" value="1"/>
</dbReference>
<dbReference type="SMART" id="SM00322">
    <property type="entry name" value="KH"/>
    <property type="match status" value="1"/>
</dbReference>
<dbReference type="SUPFAM" id="SSF54791">
    <property type="entry name" value="Eukaryotic type KH-domain (KH-domain type I)"/>
    <property type="match status" value="1"/>
</dbReference>
<dbReference type="SUPFAM" id="SSF109604">
    <property type="entry name" value="HD-domain/PDEase-like"/>
    <property type="match status" value="1"/>
</dbReference>
<dbReference type="PROSITE" id="PS51831">
    <property type="entry name" value="HD"/>
    <property type="match status" value="1"/>
</dbReference>
<dbReference type="PROSITE" id="PS50084">
    <property type="entry name" value="KH_TYPE_1"/>
    <property type="match status" value="1"/>
</dbReference>
<name>RNY_CAMHC</name>
<organism>
    <name type="scientific">Campylobacter hominis (strain ATCC BAA-381 / DSM 21671 / CCUG 45161 / LMG 19568 / NCTC 13146 / CH001A)</name>
    <dbReference type="NCBI Taxonomy" id="360107"/>
    <lineage>
        <taxon>Bacteria</taxon>
        <taxon>Pseudomonadati</taxon>
        <taxon>Campylobacterota</taxon>
        <taxon>Epsilonproteobacteria</taxon>
        <taxon>Campylobacterales</taxon>
        <taxon>Campylobacteraceae</taxon>
        <taxon>Campylobacter</taxon>
    </lineage>
</organism>
<evidence type="ECO:0000255" key="1">
    <source>
        <dbReference type="HAMAP-Rule" id="MF_00335"/>
    </source>
</evidence>
<evidence type="ECO:0000255" key="2">
    <source>
        <dbReference type="PROSITE-ProRule" id="PRU01175"/>
    </source>
</evidence>
<evidence type="ECO:0000305" key="3"/>